<keyword id="KW-1003">Cell membrane</keyword>
<keyword id="KW-0449">Lipoprotein</keyword>
<keyword id="KW-0472">Membrane</keyword>
<keyword id="KW-0564">Palmitate</keyword>
<keyword id="KW-1185">Reference proteome</keyword>
<keyword id="KW-0732">Signal</keyword>
<dbReference type="EMBL" id="AL583919">
    <property type="protein sequence ID" value="CAC30284.1"/>
    <property type="molecule type" value="Genomic_DNA"/>
</dbReference>
<dbReference type="PIR" id="H87005">
    <property type="entry name" value="H87005"/>
</dbReference>
<dbReference type="RefSeq" id="NP_301599.1">
    <property type="nucleotide sequence ID" value="NC_002677.1"/>
</dbReference>
<dbReference type="STRING" id="272631.gene:17574599"/>
<dbReference type="KEGG" id="mle:ML0775"/>
<dbReference type="PATRIC" id="fig|272631.5.peg.1393"/>
<dbReference type="Leproma" id="ML0775"/>
<dbReference type="eggNOG" id="COG5401">
    <property type="taxonomic scope" value="Bacteria"/>
</dbReference>
<dbReference type="HOGENOM" id="CLU_032207_1_0_11"/>
<dbReference type="OrthoDB" id="3226781at2"/>
<dbReference type="Proteomes" id="UP000000806">
    <property type="component" value="Chromosome"/>
</dbReference>
<dbReference type="GO" id="GO:0005886">
    <property type="term" value="C:plasma membrane"/>
    <property type="evidence" value="ECO:0007669"/>
    <property type="project" value="UniProtKB-SubCell"/>
</dbReference>
<dbReference type="HAMAP" id="MF_01373">
    <property type="entry name" value="LpqB_lipoprot"/>
    <property type="match status" value="1"/>
</dbReference>
<dbReference type="InterPro" id="IPR019606">
    <property type="entry name" value="GerMN"/>
</dbReference>
<dbReference type="InterPro" id="IPR023959">
    <property type="entry name" value="Lipoprotein_LpqB"/>
</dbReference>
<dbReference type="InterPro" id="IPR018910">
    <property type="entry name" value="Lipoprotein_LpqB_C"/>
</dbReference>
<dbReference type="NCBIfam" id="NF010141">
    <property type="entry name" value="PRK13616.1"/>
    <property type="match status" value="1"/>
</dbReference>
<dbReference type="Pfam" id="PF10646">
    <property type="entry name" value="Germane"/>
    <property type="match status" value="1"/>
</dbReference>
<dbReference type="Pfam" id="PF10647">
    <property type="entry name" value="Gmad1"/>
    <property type="match status" value="1"/>
</dbReference>
<dbReference type="SMART" id="SM00909">
    <property type="entry name" value="Germane"/>
    <property type="match status" value="1"/>
</dbReference>
<dbReference type="SUPFAM" id="SSF75011">
    <property type="entry name" value="3-carboxy-cis,cis-mucoante lactonizing enzyme"/>
    <property type="match status" value="1"/>
</dbReference>
<dbReference type="PROSITE" id="PS51257">
    <property type="entry name" value="PROKAR_LIPOPROTEIN"/>
    <property type="match status" value="1"/>
</dbReference>
<reference key="1">
    <citation type="journal article" date="2001" name="Nature">
        <title>Massive gene decay in the leprosy bacillus.</title>
        <authorList>
            <person name="Cole S.T."/>
            <person name="Eiglmeier K."/>
            <person name="Parkhill J."/>
            <person name="James K.D."/>
            <person name="Thomson N.R."/>
            <person name="Wheeler P.R."/>
            <person name="Honore N."/>
            <person name="Garnier T."/>
            <person name="Churcher C.M."/>
            <person name="Harris D.E."/>
            <person name="Mungall K.L."/>
            <person name="Basham D."/>
            <person name="Brown D."/>
            <person name="Chillingworth T."/>
            <person name="Connor R."/>
            <person name="Davies R.M."/>
            <person name="Devlin K."/>
            <person name="Duthoy S."/>
            <person name="Feltwell T."/>
            <person name="Fraser A."/>
            <person name="Hamlin N."/>
            <person name="Holroyd S."/>
            <person name="Hornsby T."/>
            <person name="Jagels K."/>
            <person name="Lacroix C."/>
            <person name="Maclean J."/>
            <person name="Moule S."/>
            <person name="Murphy L.D."/>
            <person name="Oliver K."/>
            <person name="Quail M.A."/>
            <person name="Rajandream M.A."/>
            <person name="Rutherford K.M."/>
            <person name="Rutter S."/>
            <person name="Seeger K."/>
            <person name="Simon S."/>
            <person name="Simmonds M."/>
            <person name="Skelton J."/>
            <person name="Squares R."/>
            <person name="Squares S."/>
            <person name="Stevens K."/>
            <person name="Taylor K."/>
            <person name="Whitehead S."/>
            <person name="Woodward J.R."/>
            <person name="Barrell B.G."/>
        </authorList>
    </citation>
    <scope>NUCLEOTIDE SEQUENCE [LARGE SCALE GENOMIC DNA]</scope>
    <source>
        <strain>TN</strain>
    </source>
</reference>
<organism>
    <name type="scientific">Mycobacterium leprae (strain TN)</name>
    <dbReference type="NCBI Taxonomy" id="272631"/>
    <lineage>
        <taxon>Bacteria</taxon>
        <taxon>Bacillati</taxon>
        <taxon>Actinomycetota</taxon>
        <taxon>Actinomycetes</taxon>
        <taxon>Mycobacteriales</taxon>
        <taxon>Mycobacteriaceae</taxon>
        <taxon>Mycobacterium</taxon>
    </lineage>
</organism>
<gene>
    <name evidence="1" type="primary">lpqB</name>
    <name type="ordered locus">ML0775</name>
</gene>
<name>LPQB_MYCLE</name>
<sequence>MMRGVLVIMRLLCLGMLFTGCAGVPNSSAPQAIGTVERPVPSNLPKPTPGMDPDVLLREFFKATADPANRHLAARQFLTQSASNAWDDAGRALLIDHVVFVETRGAERVSATMRADILGSLSDMGVFETAEGVLPDPGPVELIKTSGGWRIDRLPNGVFLDWQQFQATYKRNTLYFADPTGKTVVPDPRYVAVLGHDQLATELVSKLLAGPRPEMAHAVRNLLAPPLRLRGPVTRADGSKSGIGRGYGGARIDLEKLSTTDPHSRQLLAAQIIWTLARADIRGPYVINADGAPLDDRFADGWTTSDVAATDPGVADGAGAGLHALVGGALVSLIGQNTTTVLGAFGRMGYQTGAALSRSGRQVASVVTLRRGAPDMAASLWIGDLGGEAVQSADGHSLSRPSWSLDDAVWVVVDTNNVLRAIPEPASGQPARIPVDSAAVASRFPGPITDLQLSRDGTRAAMVIGGQVILAGVEQTQAGQFALTYPRRLGFGLGSSVVSLSWRTGDDIVVTRTDATHPVSYVNLDGVNSDAPARGLQVPLSVIAANPSTVYVAGPQGVLQYSASVAESQQGWSEVAGLTVMGAEPVLPG</sequence>
<protein>
    <recommendedName>
        <fullName evidence="1">Lipoprotein LpqB</fullName>
    </recommendedName>
</protein>
<comment type="subcellular location">
    <subcellularLocation>
        <location evidence="1">Cell membrane</location>
        <topology evidence="1">Lipid-anchor</topology>
    </subcellularLocation>
</comment>
<comment type="similarity">
    <text evidence="1">Belongs to the LpqB lipoprotein family.</text>
</comment>
<feature type="signal peptide" evidence="1">
    <location>
        <begin position="1"/>
        <end position="20"/>
    </location>
</feature>
<feature type="chain" id="PRO_0000286720" description="Lipoprotein LpqB">
    <location>
        <begin position="21"/>
        <end position="589"/>
    </location>
</feature>
<feature type="lipid moiety-binding region" description="N-palmitoyl cysteine" evidence="1">
    <location>
        <position position="21"/>
    </location>
</feature>
<feature type="lipid moiety-binding region" description="S-diacylglycerol cysteine" evidence="1">
    <location>
        <position position="21"/>
    </location>
</feature>
<evidence type="ECO:0000255" key="1">
    <source>
        <dbReference type="HAMAP-Rule" id="MF_01373"/>
    </source>
</evidence>
<proteinExistence type="inferred from homology"/>
<accession>Q9CCJ0</accession>